<gene>
    <name type="primary">HS3ST6</name>
    <name type="synonym">HS3ST5</name>
</gene>
<proteinExistence type="evidence at protein level"/>
<reference key="1">
    <citation type="journal article" date="2001" name="Hum. Mol. Genet.">
        <title>Sequence, structure and pathology of the fully annotated terminal 2 Mb of the short arm of human chromosome 16.</title>
        <authorList>
            <person name="Daniels R.J."/>
            <person name="Peden J.F."/>
            <person name="Lloyd C."/>
            <person name="Horsley S.W."/>
            <person name="Clark K."/>
            <person name="Tufarelli C."/>
            <person name="Kearney L."/>
            <person name="Buckle V.J."/>
            <person name="Doggett N.A."/>
            <person name="Flint J."/>
            <person name="Higgs D.R."/>
        </authorList>
    </citation>
    <scope>NUCLEOTIDE SEQUENCE [LARGE SCALE GENOMIC DNA]</scope>
</reference>
<reference key="2">
    <citation type="journal article" date="2004" name="Nature">
        <title>The sequence and analysis of duplication-rich human chromosome 16.</title>
        <authorList>
            <person name="Martin J."/>
            <person name="Han C."/>
            <person name="Gordon L.A."/>
            <person name="Terry A."/>
            <person name="Prabhakar S."/>
            <person name="She X."/>
            <person name="Xie G."/>
            <person name="Hellsten U."/>
            <person name="Chan Y.M."/>
            <person name="Altherr M."/>
            <person name="Couronne O."/>
            <person name="Aerts A."/>
            <person name="Bajorek E."/>
            <person name="Black S."/>
            <person name="Blumer H."/>
            <person name="Branscomb E."/>
            <person name="Brown N.C."/>
            <person name="Bruno W.J."/>
            <person name="Buckingham J.M."/>
            <person name="Callen D.F."/>
            <person name="Campbell C.S."/>
            <person name="Campbell M.L."/>
            <person name="Campbell E.W."/>
            <person name="Caoile C."/>
            <person name="Challacombe J.F."/>
            <person name="Chasteen L.A."/>
            <person name="Chertkov O."/>
            <person name="Chi H.C."/>
            <person name="Christensen M."/>
            <person name="Clark L.M."/>
            <person name="Cohn J.D."/>
            <person name="Denys M."/>
            <person name="Detter J.C."/>
            <person name="Dickson M."/>
            <person name="Dimitrijevic-Bussod M."/>
            <person name="Escobar J."/>
            <person name="Fawcett J.J."/>
            <person name="Flowers D."/>
            <person name="Fotopulos D."/>
            <person name="Glavina T."/>
            <person name="Gomez M."/>
            <person name="Gonzales E."/>
            <person name="Goodstein D."/>
            <person name="Goodwin L.A."/>
            <person name="Grady D.L."/>
            <person name="Grigoriev I."/>
            <person name="Groza M."/>
            <person name="Hammon N."/>
            <person name="Hawkins T."/>
            <person name="Haydu L."/>
            <person name="Hildebrand C.E."/>
            <person name="Huang W."/>
            <person name="Israni S."/>
            <person name="Jett J."/>
            <person name="Jewett P.B."/>
            <person name="Kadner K."/>
            <person name="Kimball H."/>
            <person name="Kobayashi A."/>
            <person name="Krawczyk M.-C."/>
            <person name="Leyba T."/>
            <person name="Longmire J.L."/>
            <person name="Lopez F."/>
            <person name="Lou Y."/>
            <person name="Lowry S."/>
            <person name="Ludeman T."/>
            <person name="Manohar C.F."/>
            <person name="Mark G.A."/>
            <person name="McMurray K.L."/>
            <person name="Meincke L.J."/>
            <person name="Morgan J."/>
            <person name="Moyzis R.K."/>
            <person name="Mundt M.O."/>
            <person name="Munk A.C."/>
            <person name="Nandkeshwar R.D."/>
            <person name="Pitluck S."/>
            <person name="Pollard M."/>
            <person name="Predki P."/>
            <person name="Parson-Quintana B."/>
            <person name="Ramirez L."/>
            <person name="Rash S."/>
            <person name="Retterer J."/>
            <person name="Ricke D.O."/>
            <person name="Robinson D.L."/>
            <person name="Rodriguez A."/>
            <person name="Salamov A."/>
            <person name="Saunders E.H."/>
            <person name="Scott D."/>
            <person name="Shough T."/>
            <person name="Stallings R.L."/>
            <person name="Stalvey M."/>
            <person name="Sutherland R.D."/>
            <person name="Tapia R."/>
            <person name="Tesmer J.G."/>
            <person name="Thayer N."/>
            <person name="Thompson L.S."/>
            <person name="Tice H."/>
            <person name="Torney D.C."/>
            <person name="Tran-Gyamfi M."/>
            <person name="Tsai M."/>
            <person name="Ulanovsky L.E."/>
            <person name="Ustaszewska A."/>
            <person name="Vo N."/>
            <person name="White P.S."/>
            <person name="Williams A.L."/>
            <person name="Wills P.L."/>
            <person name="Wu J.-R."/>
            <person name="Wu K."/>
            <person name="Yang J."/>
            <person name="DeJong P."/>
            <person name="Bruce D."/>
            <person name="Doggett N.A."/>
            <person name="Deaven L."/>
            <person name="Schmutz J."/>
            <person name="Grimwood J."/>
            <person name="Richardson P."/>
            <person name="Rokhsar D.S."/>
            <person name="Eichler E.E."/>
            <person name="Gilna P."/>
            <person name="Lucas S.M."/>
            <person name="Myers R.M."/>
            <person name="Rubin E.M."/>
            <person name="Pennacchio L.A."/>
        </authorList>
    </citation>
    <scope>NUCLEOTIDE SEQUENCE [LARGE SCALE GENOMIC DNA]</scope>
</reference>
<reference key="3">
    <citation type="journal article" date="2005" name="Biochem. J.">
        <title>Characterization of heparan sulphate 3-O-sulphotransferase isoform 6 and its role in assisting the entry of herpes simplex virus type 1.</title>
        <authorList>
            <person name="Xu D."/>
            <person name="Tiwari V."/>
            <person name="Xia G."/>
            <person name="Clement C."/>
            <person name="Shukla D."/>
            <person name="Liu J."/>
        </authorList>
    </citation>
    <scope>FUNCTION IN HSV-1 ENTRY</scope>
</reference>
<reference key="4">
    <citation type="journal article" date="2021" name="J. Allergy Clin. Immunol.">
        <title>Novel hereditary angioedema linked with a heparan sulfate 3-O-sulfotransferase 6 gene mutation.</title>
        <authorList>
            <person name="Bork K."/>
            <person name="Wulff K."/>
            <person name="Moehl B.S."/>
            <person name="Steinmueller-Magin L."/>
            <person name="Witzke G."/>
            <person name="Hardt J."/>
            <person name="Meinke P."/>
        </authorList>
    </citation>
    <scope>VARIANT HAE8 SER-144</scope>
    <scope>INVOLVEMENT IN HAE8</scope>
</reference>
<evidence type="ECO:0000250" key="1"/>
<evidence type="ECO:0000255" key="2"/>
<evidence type="ECO:0000256" key="3">
    <source>
        <dbReference type="SAM" id="MobiDB-lite"/>
    </source>
</evidence>
<evidence type="ECO:0000269" key="4">
    <source>
    </source>
</evidence>
<evidence type="ECO:0000269" key="5">
    <source>
    </source>
</evidence>
<evidence type="ECO:0000305" key="6"/>
<dbReference type="EC" id="2.8.2.23"/>
<dbReference type="EMBL" id="AE006640">
    <property type="protein sequence ID" value="AAK61299.1"/>
    <property type="status" value="ALT_INIT"/>
    <property type="molecule type" value="Genomic_DNA"/>
</dbReference>
<dbReference type="EMBL" id="AL031723">
    <property type="status" value="NOT_ANNOTATED_CDS"/>
    <property type="molecule type" value="Genomic_DNA"/>
</dbReference>
<dbReference type="CCDS" id="CCDS45381.2"/>
<dbReference type="RefSeq" id="NP_001009606.3">
    <property type="nucleotide sequence ID" value="NM_001009606.4"/>
</dbReference>
<dbReference type="SMR" id="Q96QI5"/>
<dbReference type="BioGRID" id="122239">
    <property type="interactions" value="9"/>
</dbReference>
<dbReference type="FunCoup" id="Q96QI5">
    <property type="interactions" value="60"/>
</dbReference>
<dbReference type="IntAct" id="Q96QI5">
    <property type="interactions" value="4"/>
</dbReference>
<dbReference type="STRING" id="9606.ENSP00000416741"/>
<dbReference type="GlyCosmos" id="Q96QI5">
    <property type="glycosylation" value="1 site, No reported glycans"/>
</dbReference>
<dbReference type="GlyGen" id="Q96QI5">
    <property type="glycosylation" value="1 site"/>
</dbReference>
<dbReference type="iPTMnet" id="Q96QI5"/>
<dbReference type="PhosphoSitePlus" id="Q96QI5"/>
<dbReference type="BioMuta" id="HS3ST6"/>
<dbReference type="DMDM" id="61214397"/>
<dbReference type="jPOST" id="Q96QI5"/>
<dbReference type="MassIVE" id="Q96QI5"/>
<dbReference type="PaxDb" id="9606-ENSP00000416741"/>
<dbReference type="PeptideAtlas" id="Q96QI5"/>
<dbReference type="ProteomicsDB" id="77881"/>
<dbReference type="Antibodypedia" id="23316">
    <property type="antibodies" value="25 antibodies from 14 providers"/>
</dbReference>
<dbReference type="DNASU" id="64711"/>
<dbReference type="Ensembl" id="ENST00000293937.5">
    <property type="protein sequence ID" value="ENSP00000293937.3"/>
    <property type="gene ID" value="ENSG00000276333.2"/>
</dbReference>
<dbReference type="Ensembl" id="ENST00000454677.3">
    <property type="protein sequence ID" value="ENSP00000416741.3"/>
    <property type="gene ID" value="ENSG00000162040.7"/>
</dbReference>
<dbReference type="GeneID" id="64711"/>
<dbReference type="KEGG" id="hsa:64711"/>
<dbReference type="MANE-Select" id="ENST00000454677.3">
    <property type="protein sequence ID" value="ENSP00000416741.3"/>
    <property type="RefSeq nucleotide sequence ID" value="NM_001009606.4"/>
    <property type="RefSeq protein sequence ID" value="NP_001009606.3"/>
</dbReference>
<dbReference type="UCSC" id="uc032epu.2">
    <property type="organism name" value="human"/>
</dbReference>
<dbReference type="AGR" id="HGNC:14178"/>
<dbReference type="CTD" id="64711"/>
<dbReference type="DisGeNET" id="64711"/>
<dbReference type="GeneCards" id="HS3ST6"/>
<dbReference type="HGNC" id="HGNC:14178">
    <property type="gene designation" value="HS3ST6"/>
</dbReference>
<dbReference type="HPA" id="ENSG00000162040">
    <property type="expression patterns" value="Tissue enriched (skin)"/>
</dbReference>
<dbReference type="MalaCards" id="HS3ST6"/>
<dbReference type="MIM" id="619210">
    <property type="type" value="gene"/>
</dbReference>
<dbReference type="MIM" id="619367">
    <property type="type" value="phenotype"/>
</dbReference>
<dbReference type="neXtProt" id="NX_Q96QI5"/>
<dbReference type="OpenTargets" id="ENSG00000162040"/>
<dbReference type="Orphanet" id="599418">
    <property type="disease" value="Hereditary angioedema with normal C1Inh not related to F12 or PLG variant"/>
</dbReference>
<dbReference type="VEuPathDB" id="HostDB:ENSG00000162040"/>
<dbReference type="eggNOG" id="KOG3704">
    <property type="taxonomic scope" value="Eukaryota"/>
</dbReference>
<dbReference type="GeneTree" id="ENSGT00940000154768"/>
<dbReference type="InParanoid" id="Q96QI5"/>
<dbReference type="OMA" id="AQHLDHW"/>
<dbReference type="OrthoDB" id="411451at2759"/>
<dbReference type="PAN-GO" id="Q96QI5">
    <property type="GO annotations" value="1 GO annotation based on evolutionary models"/>
</dbReference>
<dbReference type="PhylomeDB" id="Q96QI5"/>
<dbReference type="BRENDA" id="2.8.2.23">
    <property type="organism ID" value="2681"/>
</dbReference>
<dbReference type="PathwayCommons" id="Q96QI5"/>
<dbReference type="Reactome" id="R-HSA-2022928">
    <property type="pathway name" value="HS-GAG biosynthesis"/>
</dbReference>
<dbReference type="BioGRID-ORCS" id="64711">
    <property type="hits" value="23 hits in 1112 CRISPR screens"/>
</dbReference>
<dbReference type="GenomeRNAi" id="64711"/>
<dbReference type="Pharos" id="Q96QI5">
    <property type="development level" value="Tdark"/>
</dbReference>
<dbReference type="PRO" id="PR:Q96QI5"/>
<dbReference type="Proteomes" id="UP000005640">
    <property type="component" value="Chromosome 16"/>
</dbReference>
<dbReference type="RNAct" id="Q96QI5">
    <property type="molecule type" value="protein"/>
</dbReference>
<dbReference type="Bgee" id="ENSG00000162040">
    <property type="expression patterns" value="Expressed in skin of leg and 46 other cell types or tissues"/>
</dbReference>
<dbReference type="GO" id="GO:0000139">
    <property type="term" value="C:Golgi membrane"/>
    <property type="evidence" value="ECO:0000304"/>
    <property type="project" value="Reactome"/>
</dbReference>
<dbReference type="GO" id="GO:0008467">
    <property type="term" value="F:[heparan sulfate]-glucosamine 3-sulfotransferase activity"/>
    <property type="evidence" value="ECO:0000250"/>
    <property type="project" value="UniProtKB"/>
</dbReference>
<dbReference type="GO" id="GO:0001835">
    <property type="term" value="P:blastocyst hatching"/>
    <property type="evidence" value="ECO:0007669"/>
    <property type="project" value="Ensembl"/>
</dbReference>
<dbReference type="GO" id="GO:0015012">
    <property type="term" value="P:heparan sulfate proteoglycan biosynthetic process"/>
    <property type="evidence" value="ECO:0007669"/>
    <property type="project" value="Ensembl"/>
</dbReference>
<dbReference type="FunFam" id="3.40.50.300:FF:000194">
    <property type="entry name" value="Sulfotransferase"/>
    <property type="match status" value="1"/>
</dbReference>
<dbReference type="Gene3D" id="3.40.50.300">
    <property type="entry name" value="P-loop containing nucleotide triphosphate hydrolases"/>
    <property type="match status" value="1"/>
</dbReference>
<dbReference type="InterPro" id="IPR037359">
    <property type="entry name" value="NST/OST"/>
</dbReference>
<dbReference type="InterPro" id="IPR027417">
    <property type="entry name" value="P-loop_NTPase"/>
</dbReference>
<dbReference type="InterPro" id="IPR000863">
    <property type="entry name" value="Sulfotransferase_dom"/>
</dbReference>
<dbReference type="PANTHER" id="PTHR10605:SF62">
    <property type="entry name" value="HEPARAN SULFATE GLUCOSAMINE 3-O-SULFOTRANSFERASE 6"/>
    <property type="match status" value="1"/>
</dbReference>
<dbReference type="PANTHER" id="PTHR10605">
    <property type="entry name" value="HEPARAN SULFATE SULFOTRANSFERASE"/>
    <property type="match status" value="1"/>
</dbReference>
<dbReference type="Pfam" id="PF00685">
    <property type="entry name" value="Sulfotransfer_1"/>
    <property type="match status" value="1"/>
</dbReference>
<dbReference type="SUPFAM" id="SSF52540">
    <property type="entry name" value="P-loop containing nucleoside triphosphate hydrolases"/>
    <property type="match status" value="1"/>
</dbReference>
<sequence length="342" mass="37186">MAGSGGLGGGAGGGQGAGAGQGAALRASRAPMLLVALVLGAYCLCALPGRCPPAARAPAPAPAPSEPSSSVHRPGAPGLPLASGPGRRRFPQALIVGVKKGGTRALLEFLRLHPDVRALGSEPHFFDRCYERGLAWYRSLMPRTLDGQITMEKTPSYFVTREAPRRIHAMSPDTKLIVVVRNPVTRAISDYAQTLSKTPGLPSFRALAFRHGLGPVDTAWSAVRIGLYAQHLDHWLRYFPLSHFLFVSGERLVSDPAGEVGRVQDFLGLKRVVTDKHFYFNATKGFPCLKKAQGGSRPRCLGKSKGRPHPRVPQALVRRLQEFYRPFNRRFYQMTGQDFGWG</sequence>
<keyword id="KW-1015">Disulfide bond</keyword>
<keyword id="KW-0325">Glycoprotein</keyword>
<keyword id="KW-0333">Golgi apparatus</keyword>
<keyword id="KW-0472">Membrane</keyword>
<keyword id="KW-1267">Proteomics identification</keyword>
<keyword id="KW-1185">Reference proteome</keyword>
<keyword id="KW-0735">Signal-anchor</keyword>
<keyword id="KW-0808">Transferase</keyword>
<keyword id="KW-0812">Transmembrane</keyword>
<keyword id="KW-1133">Transmembrane helix</keyword>
<accession>Q96QI5</accession>
<accession>Q96RX7</accession>
<name>HS3S6_HUMAN</name>
<feature type="chain" id="PRO_0000085224" description="Heparan sulfate glucosamine 3-O-sulfotransferase 6">
    <location>
        <begin position="1"/>
        <end position="342"/>
    </location>
</feature>
<feature type="topological domain" description="Cytoplasmic" evidence="2">
    <location>
        <begin position="1"/>
        <end position="31"/>
    </location>
</feature>
<feature type="transmembrane region" description="Helical; Signal-anchor for type II membrane protein" evidence="2">
    <location>
        <begin position="32"/>
        <end position="49"/>
    </location>
</feature>
<feature type="topological domain" description="Lumenal" evidence="2">
    <location>
        <begin position="50"/>
        <end position="342"/>
    </location>
</feature>
<feature type="region of interest" description="Disordered" evidence="3">
    <location>
        <begin position="1"/>
        <end position="21"/>
    </location>
</feature>
<feature type="region of interest" description="Disordered" evidence="3">
    <location>
        <begin position="55"/>
        <end position="85"/>
    </location>
</feature>
<feature type="compositionally biased region" description="Low complexity" evidence="3">
    <location>
        <begin position="66"/>
        <end position="85"/>
    </location>
</feature>
<feature type="binding site" evidence="1">
    <location>
        <begin position="100"/>
        <end position="104"/>
    </location>
    <ligand>
        <name>3'-phosphoadenylyl sulfate</name>
        <dbReference type="ChEBI" id="CHEBI:58339"/>
    </ligand>
</feature>
<feature type="binding site" evidence="1">
    <location>
        <begin position="122"/>
        <end position="128"/>
    </location>
    <ligand>
        <name>substrate</name>
    </ligand>
</feature>
<feature type="binding site" evidence="1">
    <location>
        <begin position="153"/>
        <end position="156"/>
    </location>
    <ligand>
        <name>substrate</name>
    </ligand>
</feature>
<feature type="binding site" evidence="1">
    <location>
        <position position="181"/>
    </location>
    <ligand>
        <name>3'-phosphoadenylyl sulfate</name>
        <dbReference type="ChEBI" id="CHEBI:58339"/>
    </ligand>
</feature>
<feature type="binding site" evidence="1">
    <location>
        <position position="189"/>
    </location>
    <ligand>
        <name>3'-phosphoadenylyl sulfate</name>
        <dbReference type="ChEBI" id="CHEBI:58339"/>
    </ligand>
</feature>
<feature type="binding site" evidence="1">
    <location>
        <begin position="220"/>
        <end position="221"/>
    </location>
    <ligand>
        <name>substrate</name>
    </ligand>
</feature>
<feature type="binding site" evidence="1">
    <location>
        <begin position="305"/>
        <end position="309"/>
    </location>
    <ligand>
        <name>3'-phosphoadenylyl sulfate</name>
        <dbReference type="ChEBI" id="CHEBI:58339"/>
    </ligand>
</feature>
<feature type="glycosylation site" description="N-linked (GlcNAc...) asparagine" evidence="2">
    <location>
        <position position="281"/>
    </location>
</feature>
<feature type="disulfide bond" evidence="1">
    <location>
        <begin position="288"/>
        <end position="300"/>
    </location>
</feature>
<feature type="sequence variant" id="VAR_085820" description="In HAE8; uncertain significance." evidence="5">
    <original>T</original>
    <variation>S</variation>
    <location>
        <position position="144"/>
    </location>
</feature>
<feature type="sequence conflict" description="In Ref. 1." evidence="6" ref="1">
    <original>A</original>
    <variation>T</variation>
    <location>
        <position position="192"/>
    </location>
</feature>
<feature type="sequence conflict" description="In Ref. 1." evidence="6" ref="1">
    <original>L</original>
    <variation>V</variation>
    <location>
        <position position="316"/>
    </location>
</feature>
<organism>
    <name type="scientific">Homo sapiens</name>
    <name type="common">Human</name>
    <dbReference type="NCBI Taxonomy" id="9606"/>
    <lineage>
        <taxon>Eukaryota</taxon>
        <taxon>Metazoa</taxon>
        <taxon>Chordata</taxon>
        <taxon>Craniata</taxon>
        <taxon>Vertebrata</taxon>
        <taxon>Euteleostomi</taxon>
        <taxon>Mammalia</taxon>
        <taxon>Eutheria</taxon>
        <taxon>Euarchontoglires</taxon>
        <taxon>Primates</taxon>
        <taxon>Haplorrhini</taxon>
        <taxon>Catarrhini</taxon>
        <taxon>Hominidae</taxon>
        <taxon>Homo</taxon>
    </lineage>
</organism>
<protein>
    <recommendedName>
        <fullName>Heparan sulfate glucosamine 3-O-sulfotransferase 6</fullName>
        <ecNumber>2.8.2.23</ecNumber>
    </recommendedName>
    <alternativeName>
        <fullName>Heparan sulfate D-glucosaminyl 3-O-sulfotransferase 6</fullName>
        <shortName>3-OST-6</shortName>
        <shortName>Heparan sulfate 3-O-sulfotransferase 6</shortName>
        <shortName>h3-OST-6</shortName>
    </alternativeName>
</protein>
<comment type="function">
    <text evidence="4">Sulfotransferase that utilizes 3'-phospho-5'-adenylyl sulfate (PAPS) to catalyze the transfer of a sulfo group to heparan sulfate. The substrate-specific O-sulfation generates an enzyme-modified heparan sulfate which acts as a binding receptor to Herpes Simplex Virus-1 (HSV-1) and permits its entry. Unlike 3-OST-1, does not convert non-anticoagulant heparan sulfate to anticoagulant heparan sulfate.</text>
</comment>
<comment type="catalytic activity">
    <reaction>
        <text>alpha-D-glucosaminyl-[heparan sulfate](n) + 3'-phosphoadenylyl sulfate = 3-sulfo-alpha-D-glucosaminyl-[heparan sulfate](n) + adenosine 3',5'-bisphosphate + H(+)</text>
        <dbReference type="Rhea" id="RHEA:15461"/>
        <dbReference type="Rhea" id="RHEA-COMP:9830"/>
        <dbReference type="Rhea" id="RHEA-COMP:9831"/>
        <dbReference type="ChEBI" id="CHEBI:15378"/>
        <dbReference type="ChEBI" id="CHEBI:58339"/>
        <dbReference type="ChEBI" id="CHEBI:58343"/>
        <dbReference type="ChEBI" id="CHEBI:58388"/>
        <dbReference type="ChEBI" id="CHEBI:70975"/>
        <dbReference type="EC" id="2.8.2.23"/>
    </reaction>
</comment>
<comment type="subcellular location">
    <subcellularLocation>
        <location evidence="6">Golgi apparatus membrane</location>
        <topology evidence="6">Single-pass type II membrane protein</topology>
    </subcellularLocation>
</comment>
<comment type="disease" evidence="5">
    <disease id="DI-06128">
        <name>Angioedema, hereditary, 8</name>
        <acronym>HAE8</acronym>
        <description>A form of angioedema, a disorder characterized by episodic local swelling involving subcutaneous or submucous tissue of the upper respiratory and gastrointestinal tracts, face, extremities, and genitalia. HAE8 inheritance is autosomal dominant.</description>
        <dbReference type="MIM" id="619367"/>
    </disease>
    <text>The disease may be caused by variants affecting the gene represented in this entry.</text>
</comment>
<comment type="similarity">
    <text evidence="6">Belongs to the sulfotransferase 1 family.</text>
</comment>
<comment type="sequence caution" evidence="6">
    <conflict type="erroneous initiation">
        <sequence resource="EMBL-CDS" id="AAK61299"/>
    </conflict>
    <text>Truncated N-terminus.</text>
</comment>